<protein>
    <recommendedName>
        <fullName evidence="1">ATP synthase subunit alpha</fullName>
        <ecNumber evidence="1">7.1.2.2</ecNumber>
    </recommendedName>
    <alternativeName>
        <fullName evidence="1">ATP synthase F1 sector subunit alpha</fullName>
    </alternativeName>
    <alternativeName>
        <fullName evidence="1">F-ATPase subunit alpha</fullName>
    </alternativeName>
</protein>
<dbReference type="EC" id="7.1.2.2" evidence="1"/>
<dbReference type="EMBL" id="CP000758">
    <property type="protein sequence ID" value="ABS13823.1"/>
    <property type="molecule type" value="Genomic_DNA"/>
</dbReference>
<dbReference type="RefSeq" id="WP_012091259.1">
    <property type="nucleotide sequence ID" value="NC_009667.1"/>
</dbReference>
<dbReference type="SMR" id="A6WXW9"/>
<dbReference type="STRING" id="439375.Oant_1103"/>
<dbReference type="KEGG" id="oan:Oant_1103"/>
<dbReference type="eggNOG" id="COG0056">
    <property type="taxonomic scope" value="Bacteria"/>
</dbReference>
<dbReference type="HOGENOM" id="CLU_010091_2_1_5"/>
<dbReference type="PhylomeDB" id="A6WXW9"/>
<dbReference type="Proteomes" id="UP000002301">
    <property type="component" value="Chromosome 1"/>
</dbReference>
<dbReference type="GO" id="GO:0005886">
    <property type="term" value="C:plasma membrane"/>
    <property type="evidence" value="ECO:0007669"/>
    <property type="project" value="UniProtKB-SubCell"/>
</dbReference>
<dbReference type="GO" id="GO:0045259">
    <property type="term" value="C:proton-transporting ATP synthase complex"/>
    <property type="evidence" value="ECO:0007669"/>
    <property type="project" value="UniProtKB-KW"/>
</dbReference>
<dbReference type="GO" id="GO:0043531">
    <property type="term" value="F:ADP binding"/>
    <property type="evidence" value="ECO:0007669"/>
    <property type="project" value="TreeGrafter"/>
</dbReference>
<dbReference type="GO" id="GO:0005524">
    <property type="term" value="F:ATP binding"/>
    <property type="evidence" value="ECO:0007669"/>
    <property type="project" value="UniProtKB-UniRule"/>
</dbReference>
<dbReference type="GO" id="GO:0046933">
    <property type="term" value="F:proton-transporting ATP synthase activity, rotational mechanism"/>
    <property type="evidence" value="ECO:0007669"/>
    <property type="project" value="UniProtKB-UniRule"/>
</dbReference>
<dbReference type="CDD" id="cd18113">
    <property type="entry name" value="ATP-synt_F1_alpha_C"/>
    <property type="match status" value="1"/>
</dbReference>
<dbReference type="CDD" id="cd18116">
    <property type="entry name" value="ATP-synt_F1_alpha_N"/>
    <property type="match status" value="1"/>
</dbReference>
<dbReference type="CDD" id="cd01132">
    <property type="entry name" value="F1-ATPase_alpha_CD"/>
    <property type="match status" value="1"/>
</dbReference>
<dbReference type="FunFam" id="1.20.150.20:FF:000001">
    <property type="entry name" value="ATP synthase subunit alpha"/>
    <property type="match status" value="1"/>
</dbReference>
<dbReference type="FunFam" id="2.40.30.20:FF:000001">
    <property type="entry name" value="ATP synthase subunit alpha"/>
    <property type="match status" value="1"/>
</dbReference>
<dbReference type="FunFam" id="3.40.50.300:FF:002432">
    <property type="entry name" value="ATP synthase subunit alpha, mitochondrial"/>
    <property type="match status" value="1"/>
</dbReference>
<dbReference type="Gene3D" id="2.40.30.20">
    <property type="match status" value="1"/>
</dbReference>
<dbReference type="Gene3D" id="1.20.150.20">
    <property type="entry name" value="ATP synthase alpha/beta chain, C-terminal domain"/>
    <property type="match status" value="1"/>
</dbReference>
<dbReference type="Gene3D" id="3.40.50.300">
    <property type="entry name" value="P-loop containing nucleotide triphosphate hydrolases"/>
    <property type="match status" value="1"/>
</dbReference>
<dbReference type="HAMAP" id="MF_01346">
    <property type="entry name" value="ATP_synth_alpha_bact"/>
    <property type="match status" value="1"/>
</dbReference>
<dbReference type="InterPro" id="IPR023366">
    <property type="entry name" value="ATP_synth_asu-like_sf"/>
</dbReference>
<dbReference type="InterPro" id="IPR000793">
    <property type="entry name" value="ATP_synth_asu_C"/>
</dbReference>
<dbReference type="InterPro" id="IPR038376">
    <property type="entry name" value="ATP_synth_asu_C_sf"/>
</dbReference>
<dbReference type="InterPro" id="IPR033732">
    <property type="entry name" value="ATP_synth_F1_a_nt-bd_dom"/>
</dbReference>
<dbReference type="InterPro" id="IPR005294">
    <property type="entry name" value="ATP_synth_F1_asu"/>
</dbReference>
<dbReference type="InterPro" id="IPR020003">
    <property type="entry name" value="ATPase_a/bsu_AS"/>
</dbReference>
<dbReference type="InterPro" id="IPR004100">
    <property type="entry name" value="ATPase_F1/V1/A1_a/bsu_N"/>
</dbReference>
<dbReference type="InterPro" id="IPR036121">
    <property type="entry name" value="ATPase_F1/V1/A1_a/bsu_N_sf"/>
</dbReference>
<dbReference type="InterPro" id="IPR000194">
    <property type="entry name" value="ATPase_F1/V1/A1_a/bsu_nucl-bd"/>
</dbReference>
<dbReference type="InterPro" id="IPR027417">
    <property type="entry name" value="P-loop_NTPase"/>
</dbReference>
<dbReference type="NCBIfam" id="TIGR00962">
    <property type="entry name" value="atpA"/>
    <property type="match status" value="1"/>
</dbReference>
<dbReference type="NCBIfam" id="NF009884">
    <property type="entry name" value="PRK13343.1"/>
    <property type="match status" value="1"/>
</dbReference>
<dbReference type="PANTHER" id="PTHR48082">
    <property type="entry name" value="ATP SYNTHASE SUBUNIT ALPHA, MITOCHONDRIAL"/>
    <property type="match status" value="1"/>
</dbReference>
<dbReference type="PANTHER" id="PTHR48082:SF2">
    <property type="entry name" value="ATP SYNTHASE SUBUNIT ALPHA, MITOCHONDRIAL"/>
    <property type="match status" value="1"/>
</dbReference>
<dbReference type="Pfam" id="PF00006">
    <property type="entry name" value="ATP-synt_ab"/>
    <property type="match status" value="1"/>
</dbReference>
<dbReference type="Pfam" id="PF00306">
    <property type="entry name" value="ATP-synt_ab_C"/>
    <property type="match status" value="1"/>
</dbReference>
<dbReference type="Pfam" id="PF02874">
    <property type="entry name" value="ATP-synt_ab_N"/>
    <property type="match status" value="1"/>
</dbReference>
<dbReference type="PIRSF" id="PIRSF039088">
    <property type="entry name" value="F_ATPase_subunit_alpha"/>
    <property type="match status" value="1"/>
</dbReference>
<dbReference type="SUPFAM" id="SSF47917">
    <property type="entry name" value="C-terminal domain of alpha and beta subunits of F1 ATP synthase"/>
    <property type="match status" value="1"/>
</dbReference>
<dbReference type="SUPFAM" id="SSF50615">
    <property type="entry name" value="N-terminal domain of alpha and beta subunits of F1 ATP synthase"/>
    <property type="match status" value="1"/>
</dbReference>
<dbReference type="SUPFAM" id="SSF52540">
    <property type="entry name" value="P-loop containing nucleoside triphosphate hydrolases"/>
    <property type="match status" value="1"/>
</dbReference>
<dbReference type="PROSITE" id="PS00152">
    <property type="entry name" value="ATPASE_ALPHA_BETA"/>
    <property type="match status" value="1"/>
</dbReference>
<organism>
    <name type="scientific">Brucella anthropi (strain ATCC 49188 / DSM 6882 / CCUG 24695 / JCM 21032 / LMG 3331 / NBRC 15819 / NCTC 12168 / Alc 37)</name>
    <name type="common">Ochrobactrum anthropi</name>
    <dbReference type="NCBI Taxonomy" id="439375"/>
    <lineage>
        <taxon>Bacteria</taxon>
        <taxon>Pseudomonadati</taxon>
        <taxon>Pseudomonadota</taxon>
        <taxon>Alphaproteobacteria</taxon>
        <taxon>Hyphomicrobiales</taxon>
        <taxon>Brucellaceae</taxon>
        <taxon>Brucella/Ochrobactrum group</taxon>
        <taxon>Brucella</taxon>
    </lineage>
</organism>
<name>ATPA_BRUA4</name>
<sequence length="509" mass="54778">MDIRAAEISAILKEQIKNFGKEAEVSEVGQVLSVGDGIARVYGLDNVQAGEMVEFPGGIRGMALNLESDNVGVVIFGADRDIKEGDIVKRTGAIVDVPVGPGLLGRVVDALGNPIDGKGPIVATERRRVDVKAPGIIPRKSVHEPMSTGLKAVDALIPVGRGQRELVIGDRQTGKTAIILDTFLNQKPIHDNGPDSEKLYCVYVAIGQKRSTVAQFVKVLEERGALEYSIVIAATASDPAPMQYLAPFAGCAMGEYFRDNSMHALIGYDDLSKQAVAYRQMSLLLRRPPGREAYPGDVFYLHSRLLERAAKLNDENGAGSLTALPVIETQGNDVSAFIPTNVISITDGQIFLETNLFYQGIRPAVNVGLSVSRVGSSAQVKAMKQVAGSIKGELAQYREMAAFAQFGSDLDASTQRLLNRGARLTELLKQPQFSPLKTEEQVAVIFAGVNGYLDKIAVNQVGKFEAGLLSSLRTEHKDVLDAIRDEKALTDNIKAKLKAAVDAFAKSFA</sequence>
<keyword id="KW-0066">ATP synthesis</keyword>
<keyword id="KW-0067">ATP-binding</keyword>
<keyword id="KW-0997">Cell inner membrane</keyword>
<keyword id="KW-1003">Cell membrane</keyword>
<keyword id="KW-0139">CF(1)</keyword>
<keyword id="KW-0375">Hydrogen ion transport</keyword>
<keyword id="KW-0406">Ion transport</keyword>
<keyword id="KW-0472">Membrane</keyword>
<keyword id="KW-0547">Nucleotide-binding</keyword>
<keyword id="KW-1185">Reference proteome</keyword>
<keyword id="KW-1278">Translocase</keyword>
<keyword id="KW-0813">Transport</keyword>
<feature type="chain" id="PRO_1000055074" description="ATP synthase subunit alpha">
    <location>
        <begin position="1"/>
        <end position="509"/>
    </location>
</feature>
<feature type="binding site" evidence="1">
    <location>
        <begin position="169"/>
        <end position="176"/>
    </location>
    <ligand>
        <name>ATP</name>
        <dbReference type="ChEBI" id="CHEBI:30616"/>
    </ligand>
</feature>
<feature type="site" description="Required for activity" evidence="1">
    <location>
        <position position="370"/>
    </location>
</feature>
<gene>
    <name evidence="1" type="primary">atpA</name>
    <name type="ordered locus">Oant_1103</name>
</gene>
<reference key="1">
    <citation type="journal article" date="2011" name="J. Bacteriol.">
        <title>Genome of Ochrobactrum anthropi ATCC 49188 T, a versatile opportunistic pathogen and symbiont of several eukaryotic hosts.</title>
        <authorList>
            <person name="Chain P.S."/>
            <person name="Lang D.M."/>
            <person name="Comerci D.J."/>
            <person name="Malfatti S.A."/>
            <person name="Vergez L.M."/>
            <person name="Shin M."/>
            <person name="Ugalde R.A."/>
            <person name="Garcia E."/>
            <person name="Tolmasky M.E."/>
        </authorList>
    </citation>
    <scope>NUCLEOTIDE SEQUENCE [LARGE SCALE GENOMIC DNA]</scope>
    <source>
        <strain>ATCC 49188 / DSM 6882 / CCUG 24695 / JCM 21032 / LMG 3331 / NBRC 15819 / NCTC 12168 / Alc 37</strain>
    </source>
</reference>
<evidence type="ECO:0000255" key="1">
    <source>
        <dbReference type="HAMAP-Rule" id="MF_01346"/>
    </source>
</evidence>
<comment type="function">
    <text evidence="1">Produces ATP from ADP in the presence of a proton gradient across the membrane. The alpha chain is a regulatory subunit.</text>
</comment>
<comment type="catalytic activity">
    <reaction evidence="1">
        <text>ATP + H2O + 4 H(+)(in) = ADP + phosphate + 5 H(+)(out)</text>
        <dbReference type="Rhea" id="RHEA:57720"/>
        <dbReference type="ChEBI" id="CHEBI:15377"/>
        <dbReference type="ChEBI" id="CHEBI:15378"/>
        <dbReference type="ChEBI" id="CHEBI:30616"/>
        <dbReference type="ChEBI" id="CHEBI:43474"/>
        <dbReference type="ChEBI" id="CHEBI:456216"/>
        <dbReference type="EC" id="7.1.2.2"/>
    </reaction>
</comment>
<comment type="subunit">
    <text evidence="1">F-type ATPases have 2 components, CF(1) - the catalytic core - and CF(0) - the membrane proton channel. CF(1) has five subunits: alpha(3), beta(3), gamma(1), delta(1), epsilon(1). CF(0) has three main subunits: a(1), b(2) and c(9-12). The alpha and beta chains form an alternating ring which encloses part of the gamma chain. CF(1) is attached to CF(0) by a central stalk formed by the gamma and epsilon chains, while a peripheral stalk is formed by the delta and b chains.</text>
</comment>
<comment type="subcellular location">
    <subcellularLocation>
        <location evidence="1">Cell inner membrane</location>
        <topology evidence="1">Peripheral membrane protein</topology>
    </subcellularLocation>
</comment>
<comment type="similarity">
    <text evidence="1">Belongs to the ATPase alpha/beta chains family.</text>
</comment>
<proteinExistence type="inferred from homology"/>
<accession>A6WXW9</accession>